<accession>B2TU13</accession>
<feature type="chain" id="PRO_1000192540" description="Guanosine-5'-triphosphate,3'-diphosphate pyrophosphatase">
    <location>
        <begin position="1"/>
        <end position="494"/>
    </location>
</feature>
<gene>
    <name evidence="1" type="primary">gppA</name>
    <name type="ordered locus">SbBS512_E4142</name>
</gene>
<proteinExistence type="inferred from homology"/>
<name>GPPA_SHIB3</name>
<comment type="function">
    <text evidence="1">Catalyzes the conversion of pppGpp to ppGpp. Guanosine pentaphosphate (pppGpp) is a cytoplasmic signaling molecule which together with ppGpp controls the 'stringent response', an adaptive process that allows bacteria to respond to amino acid starvation, resulting in the coordinated regulation of numerous cellular activities.</text>
</comment>
<comment type="catalytic activity">
    <reaction evidence="1">
        <text>guanosine 3'-diphosphate 5'-triphosphate + H2O = guanosine 3',5'-bis(diphosphate) + phosphate + H(+)</text>
        <dbReference type="Rhea" id="RHEA:13073"/>
        <dbReference type="ChEBI" id="CHEBI:15377"/>
        <dbReference type="ChEBI" id="CHEBI:15378"/>
        <dbReference type="ChEBI" id="CHEBI:43474"/>
        <dbReference type="ChEBI" id="CHEBI:77828"/>
        <dbReference type="ChEBI" id="CHEBI:142410"/>
        <dbReference type="EC" id="3.6.1.40"/>
    </reaction>
</comment>
<comment type="pathway">
    <text evidence="1">Purine metabolism; ppGpp biosynthesis; ppGpp from GTP: step 2/2.</text>
</comment>
<comment type="similarity">
    <text evidence="1">Belongs to the GppA/Ppx family. GppA subfamily.</text>
</comment>
<organism>
    <name type="scientific">Shigella boydii serotype 18 (strain CDC 3083-94 / BS512)</name>
    <dbReference type="NCBI Taxonomy" id="344609"/>
    <lineage>
        <taxon>Bacteria</taxon>
        <taxon>Pseudomonadati</taxon>
        <taxon>Pseudomonadota</taxon>
        <taxon>Gammaproteobacteria</taxon>
        <taxon>Enterobacterales</taxon>
        <taxon>Enterobacteriaceae</taxon>
        <taxon>Shigella</taxon>
    </lineage>
</organism>
<protein>
    <recommendedName>
        <fullName evidence="1">Guanosine-5'-triphosphate,3'-diphosphate pyrophosphatase</fullName>
        <ecNumber evidence="1">3.6.1.40</ecNumber>
    </recommendedName>
    <alternativeName>
        <fullName evidence="1">Guanosine pentaphosphate phosphohydrolase</fullName>
    </alternativeName>
    <alternativeName>
        <fullName evidence="1">pppGpp-5'-phosphohydrolase</fullName>
    </alternativeName>
</protein>
<dbReference type="EC" id="3.6.1.40" evidence="1"/>
<dbReference type="EMBL" id="CP001063">
    <property type="protein sequence ID" value="ACD10101.1"/>
    <property type="molecule type" value="Genomic_DNA"/>
</dbReference>
<dbReference type="RefSeq" id="WP_001299253.1">
    <property type="nucleotide sequence ID" value="NC_010658.1"/>
</dbReference>
<dbReference type="SMR" id="B2TU13"/>
<dbReference type="STRING" id="344609.SbBS512_E4142"/>
<dbReference type="GeneID" id="75204769"/>
<dbReference type="KEGG" id="sbc:SbBS512_E4142"/>
<dbReference type="HOGENOM" id="CLU_025908_4_0_6"/>
<dbReference type="UniPathway" id="UPA00908">
    <property type="reaction ID" value="UER00885"/>
</dbReference>
<dbReference type="Proteomes" id="UP000001030">
    <property type="component" value="Chromosome"/>
</dbReference>
<dbReference type="GO" id="GO:0008894">
    <property type="term" value="F:guanosine-5'-triphosphate,3'-diphosphate diphosphatase activity"/>
    <property type="evidence" value="ECO:0007669"/>
    <property type="project" value="UniProtKB-UniRule"/>
</dbReference>
<dbReference type="GO" id="GO:0015974">
    <property type="term" value="P:guanosine pentaphosphate catabolic process"/>
    <property type="evidence" value="ECO:0007669"/>
    <property type="project" value="InterPro"/>
</dbReference>
<dbReference type="GO" id="GO:0015970">
    <property type="term" value="P:guanosine tetraphosphate biosynthetic process"/>
    <property type="evidence" value="ECO:0007669"/>
    <property type="project" value="UniProtKB-UniRule"/>
</dbReference>
<dbReference type="GO" id="GO:0015949">
    <property type="term" value="P:nucleobase-containing small molecule interconversion"/>
    <property type="evidence" value="ECO:0007669"/>
    <property type="project" value="TreeGrafter"/>
</dbReference>
<dbReference type="CDD" id="cd24117">
    <property type="entry name" value="ASKHA_NBD_EcGppA-like"/>
    <property type="match status" value="1"/>
</dbReference>
<dbReference type="FunFam" id="1.10.3210.10:FF:000004">
    <property type="entry name" value="Guanosine-5'-triphosphate,3'-diphosphate pyrophosphatase"/>
    <property type="match status" value="1"/>
</dbReference>
<dbReference type="FunFam" id="3.30.420.150:FF:000001">
    <property type="entry name" value="Guanosine-5'-triphosphate,3'-diphosphate pyrophosphatase"/>
    <property type="match status" value="1"/>
</dbReference>
<dbReference type="FunFam" id="3.30.420.40:FF:000023">
    <property type="entry name" value="Guanosine-5'-triphosphate,3'-diphosphate pyrophosphatase"/>
    <property type="match status" value="1"/>
</dbReference>
<dbReference type="Gene3D" id="3.30.420.40">
    <property type="match status" value="1"/>
</dbReference>
<dbReference type="Gene3D" id="3.30.420.150">
    <property type="entry name" value="Exopolyphosphatase. Domain 2"/>
    <property type="match status" value="1"/>
</dbReference>
<dbReference type="Gene3D" id="1.10.3210.10">
    <property type="entry name" value="Hypothetical protein af1432"/>
    <property type="match status" value="1"/>
</dbReference>
<dbReference type="HAMAP" id="MF_01550">
    <property type="entry name" value="GppA"/>
    <property type="match status" value="1"/>
</dbReference>
<dbReference type="InterPro" id="IPR043129">
    <property type="entry name" value="ATPase_NBD"/>
</dbReference>
<dbReference type="InterPro" id="IPR050273">
    <property type="entry name" value="GppA/Ppx_hydrolase"/>
</dbReference>
<dbReference type="InterPro" id="IPR023709">
    <property type="entry name" value="Guo-5TP_3DP_PyrP"/>
</dbReference>
<dbReference type="InterPro" id="IPR048950">
    <property type="entry name" value="Ppx_GppA_C"/>
</dbReference>
<dbReference type="InterPro" id="IPR003695">
    <property type="entry name" value="Ppx_GppA_N"/>
</dbReference>
<dbReference type="InterPro" id="IPR030673">
    <property type="entry name" value="PyroPPase_GppA_Ppx"/>
</dbReference>
<dbReference type="NCBIfam" id="NF008260">
    <property type="entry name" value="PRK11031.1"/>
    <property type="match status" value="1"/>
</dbReference>
<dbReference type="PANTHER" id="PTHR30005">
    <property type="entry name" value="EXOPOLYPHOSPHATASE"/>
    <property type="match status" value="1"/>
</dbReference>
<dbReference type="PANTHER" id="PTHR30005:SF0">
    <property type="entry name" value="RETROGRADE REGULATION PROTEIN 2"/>
    <property type="match status" value="1"/>
</dbReference>
<dbReference type="Pfam" id="PF02541">
    <property type="entry name" value="Ppx-GppA"/>
    <property type="match status" value="1"/>
</dbReference>
<dbReference type="Pfam" id="PF21447">
    <property type="entry name" value="Ppx-GppA_III"/>
    <property type="match status" value="1"/>
</dbReference>
<dbReference type="PIRSF" id="PIRSF001267">
    <property type="entry name" value="Pyrophosphatase_GppA_Ppx"/>
    <property type="match status" value="1"/>
</dbReference>
<dbReference type="SUPFAM" id="SSF53067">
    <property type="entry name" value="Actin-like ATPase domain"/>
    <property type="match status" value="2"/>
</dbReference>
<dbReference type="SUPFAM" id="SSF109604">
    <property type="entry name" value="HD-domain/PDEase-like"/>
    <property type="match status" value="1"/>
</dbReference>
<sequence length="494" mass="54885">MGSTSSLYAAIDLGSNSFHMLVVREVAGSIQTLTRIKRKVRLAAGLNSENALSNEAMERGWQCLRLFAERLQDIPPSQIRVVATATLRLAVNAGDFIAKAQEILGCPVQVISGEEEARLIYQGVAHTTGGADQRLVVDIGGASTELVTGTGAQTTSLFSLSMGCVTWLERYFADRNLGQENFDAAEKAAREVLRPVADELRYHGWKVCVGASGTVQALQEIMMAQGMDERITLEKLQQLKQRAIHCGRLEELEIDGLTLERALVFPSGLAILIAIFTELNIQCMTLAGGALREGLVYGMLHLAVEQDIRSRTLRNIQRRFMIDIDQAQRVAKVAANFFDQVEKEWHLEAISRDLLISACQLHEIGLSVDFKQAPQHAAYLVRNLDLPGFTPAQKKLLATLLLNQTNPVDLSSLHQQNAVPPRVAEQLCRLLRLAIIFASRRRDDLVPEMTLQANHELLTLTLPQGWLTQHPLGKEIIAQESQWQSYVHWPLEVH</sequence>
<reference key="1">
    <citation type="submission" date="2008-05" db="EMBL/GenBank/DDBJ databases">
        <title>Complete sequence of Shigella boydii serotype 18 strain BS512.</title>
        <authorList>
            <person name="Rasko D.A."/>
            <person name="Rosovitz M."/>
            <person name="Maurelli A.T."/>
            <person name="Myers G."/>
            <person name="Seshadri R."/>
            <person name="Cer R."/>
            <person name="Jiang L."/>
            <person name="Ravel J."/>
            <person name="Sebastian Y."/>
        </authorList>
    </citation>
    <scope>NUCLEOTIDE SEQUENCE [LARGE SCALE GENOMIC DNA]</scope>
    <source>
        <strain>CDC 3083-94 / BS512</strain>
    </source>
</reference>
<keyword id="KW-0378">Hydrolase</keyword>
<keyword id="KW-1185">Reference proteome</keyword>
<evidence type="ECO:0000255" key="1">
    <source>
        <dbReference type="HAMAP-Rule" id="MF_01550"/>
    </source>
</evidence>